<evidence type="ECO:0000255" key="1">
    <source>
        <dbReference type="HAMAP-Rule" id="MF_00013"/>
    </source>
</evidence>
<evidence type="ECO:0000255" key="2">
    <source>
        <dbReference type="PROSITE-ProRule" id="PRU01067"/>
    </source>
</evidence>
<proteinExistence type="inferred from homology"/>
<organism>
    <name type="scientific">Marinobacter nauticus (strain ATCC 700491 / DSM 11845 / VT8)</name>
    <name type="common">Marinobacter aquaeolei</name>
    <dbReference type="NCBI Taxonomy" id="351348"/>
    <lineage>
        <taxon>Bacteria</taxon>
        <taxon>Pseudomonadati</taxon>
        <taxon>Pseudomonadota</taxon>
        <taxon>Gammaproteobacteria</taxon>
        <taxon>Pseudomonadales</taxon>
        <taxon>Marinobacteraceae</taxon>
        <taxon>Marinobacter</taxon>
    </lineage>
</organism>
<name>LIPB_MARN8</name>
<gene>
    <name evidence="1" type="primary">lipB</name>
    <name type="ordered locus">Maqu_2408</name>
</gene>
<protein>
    <recommendedName>
        <fullName evidence="1">Octanoyltransferase</fullName>
        <ecNumber evidence="1">2.3.1.181</ecNumber>
    </recommendedName>
    <alternativeName>
        <fullName evidence="1">Lipoate-protein ligase B</fullName>
    </alternativeName>
    <alternativeName>
        <fullName evidence="1">Lipoyl/octanoyl transferase</fullName>
    </alternativeName>
    <alternativeName>
        <fullName evidence="1">Octanoyl-[acyl-carrier-protein]-protein N-octanoyltransferase</fullName>
    </alternativeName>
</protein>
<reference key="1">
    <citation type="journal article" date="2011" name="Appl. Environ. Microbiol.">
        <title>Genomic potential of Marinobacter aquaeolei, a biogeochemical 'opportunitroph'.</title>
        <authorList>
            <person name="Singer E."/>
            <person name="Webb E.A."/>
            <person name="Nelson W.C."/>
            <person name="Heidelberg J.F."/>
            <person name="Ivanova N."/>
            <person name="Pati A."/>
            <person name="Edwards K.J."/>
        </authorList>
    </citation>
    <scope>NUCLEOTIDE SEQUENCE [LARGE SCALE GENOMIC DNA]</scope>
    <source>
        <strain>ATCC 700491 / DSM 11845 / VT8</strain>
    </source>
</reference>
<accession>A1U3B4</accession>
<keyword id="KW-0012">Acyltransferase</keyword>
<keyword id="KW-0963">Cytoplasm</keyword>
<keyword id="KW-0808">Transferase</keyword>
<dbReference type="EC" id="2.3.1.181" evidence="1"/>
<dbReference type="EMBL" id="CP000514">
    <property type="protein sequence ID" value="ABM19483.1"/>
    <property type="molecule type" value="Genomic_DNA"/>
</dbReference>
<dbReference type="RefSeq" id="WP_011785867.1">
    <property type="nucleotide sequence ID" value="NC_008740.1"/>
</dbReference>
<dbReference type="SMR" id="A1U3B4"/>
<dbReference type="STRING" id="351348.Maqu_2408"/>
<dbReference type="KEGG" id="maq:Maqu_2408"/>
<dbReference type="eggNOG" id="COG0321">
    <property type="taxonomic scope" value="Bacteria"/>
</dbReference>
<dbReference type="HOGENOM" id="CLU_035168_3_1_6"/>
<dbReference type="OrthoDB" id="9787061at2"/>
<dbReference type="UniPathway" id="UPA00538">
    <property type="reaction ID" value="UER00592"/>
</dbReference>
<dbReference type="Proteomes" id="UP000000998">
    <property type="component" value="Chromosome"/>
</dbReference>
<dbReference type="GO" id="GO:0005737">
    <property type="term" value="C:cytoplasm"/>
    <property type="evidence" value="ECO:0007669"/>
    <property type="project" value="UniProtKB-SubCell"/>
</dbReference>
<dbReference type="GO" id="GO:0033819">
    <property type="term" value="F:lipoyl(octanoyl) transferase activity"/>
    <property type="evidence" value="ECO:0007669"/>
    <property type="project" value="UniProtKB-EC"/>
</dbReference>
<dbReference type="GO" id="GO:0036211">
    <property type="term" value="P:protein modification process"/>
    <property type="evidence" value="ECO:0007669"/>
    <property type="project" value="InterPro"/>
</dbReference>
<dbReference type="CDD" id="cd16444">
    <property type="entry name" value="LipB"/>
    <property type="match status" value="1"/>
</dbReference>
<dbReference type="FunFam" id="3.30.930.10:FF:000020">
    <property type="entry name" value="Octanoyltransferase"/>
    <property type="match status" value="1"/>
</dbReference>
<dbReference type="Gene3D" id="3.30.930.10">
    <property type="entry name" value="Bira Bifunctional Protein, Domain 2"/>
    <property type="match status" value="1"/>
</dbReference>
<dbReference type="HAMAP" id="MF_00013">
    <property type="entry name" value="LipB"/>
    <property type="match status" value="1"/>
</dbReference>
<dbReference type="InterPro" id="IPR045864">
    <property type="entry name" value="aa-tRNA-synth_II/BPL/LPL"/>
</dbReference>
<dbReference type="InterPro" id="IPR004143">
    <property type="entry name" value="BPL_LPL_catalytic"/>
</dbReference>
<dbReference type="InterPro" id="IPR000544">
    <property type="entry name" value="Octanoyltransferase"/>
</dbReference>
<dbReference type="InterPro" id="IPR020605">
    <property type="entry name" value="Octanoyltransferase_CS"/>
</dbReference>
<dbReference type="NCBIfam" id="TIGR00214">
    <property type="entry name" value="lipB"/>
    <property type="match status" value="1"/>
</dbReference>
<dbReference type="NCBIfam" id="NF010922">
    <property type="entry name" value="PRK14342.1"/>
    <property type="match status" value="1"/>
</dbReference>
<dbReference type="PANTHER" id="PTHR10993:SF7">
    <property type="entry name" value="LIPOYLTRANSFERASE 2, MITOCHONDRIAL-RELATED"/>
    <property type="match status" value="1"/>
</dbReference>
<dbReference type="PANTHER" id="PTHR10993">
    <property type="entry name" value="OCTANOYLTRANSFERASE"/>
    <property type="match status" value="1"/>
</dbReference>
<dbReference type="Pfam" id="PF21948">
    <property type="entry name" value="LplA-B_cat"/>
    <property type="match status" value="1"/>
</dbReference>
<dbReference type="PIRSF" id="PIRSF016262">
    <property type="entry name" value="LPLase"/>
    <property type="match status" value="1"/>
</dbReference>
<dbReference type="SUPFAM" id="SSF55681">
    <property type="entry name" value="Class II aaRS and biotin synthetases"/>
    <property type="match status" value="1"/>
</dbReference>
<dbReference type="PROSITE" id="PS51733">
    <property type="entry name" value="BPL_LPL_CATALYTIC"/>
    <property type="match status" value="1"/>
</dbReference>
<dbReference type="PROSITE" id="PS01313">
    <property type="entry name" value="LIPB"/>
    <property type="match status" value="1"/>
</dbReference>
<comment type="function">
    <text evidence="1">Catalyzes the transfer of endogenously produced octanoic acid from octanoyl-acyl-carrier-protein onto the lipoyl domains of lipoate-dependent enzymes. Lipoyl-ACP can also act as a substrate although octanoyl-ACP is likely to be the physiological substrate.</text>
</comment>
<comment type="catalytic activity">
    <reaction evidence="1">
        <text>octanoyl-[ACP] + L-lysyl-[protein] = N(6)-octanoyl-L-lysyl-[protein] + holo-[ACP] + H(+)</text>
        <dbReference type="Rhea" id="RHEA:17665"/>
        <dbReference type="Rhea" id="RHEA-COMP:9636"/>
        <dbReference type="Rhea" id="RHEA-COMP:9685"/>
        <dbReference type="Rhea" id="RHEA-COMP:9752"/>
        <dbReference type="Rhea" id="RHEA-COMP:9928"/>
        <dbReference type="ChEBI" id="CHEBI:15378"/>
        <dbReference type="ChEBI" id="CHEBI:29969"/>
        <dbReference type="ChEBI" id="CHEBI:64479"/>
        <dbReference type="ChEBI" id="CHEBI:78463"/>
        <dbReference type="ChEBI" id="CHEBI:78809"/>
        <dbReference type="EC" id="2.3.1.181"/>
    </reaction>
</comment>
<comment type="pathway">
    <text evidence="1">Protein modification; protein lipoylation via endogenous pathway; protein N(6)-(lipoyl)lysine from octanoyl-[acyl-carrier-protein]: step 1/2.</text>
</comment>
<comment type="subcellular location">
    <subcellularLocation>
        <location evidence="1">Cytoplasm</location>
    </subcellularLocation>
</comment>
<comment type="miscellaneous">
    <text evidence="1">In the reaction, the free carboxyl group of octanoic acid is attached via an amide linkage to the epsilon-amino group of a specific lysine residue of lipoyl domains of lipoate-dependent enzymes.</text>
</comment>
<comment type="similarity">
    <text evidence="1">Belongs to the LipB family.</text>
</comment>
<sequence>MADLIVRSLGQQPYMETWEAMKSFTANRDETTVDELWCLEHPRVFTQGQAGKAEHILLPGDIPVIQVDRGGQVTYHGPGQLVIYLLIDLTRHKLGVRNLVSAIEQAIVRTLAQGGIEAAPRSDAPGVYVNGAKIASLGLRVRRGCSFHGLALNVNMDMEPFSRINPCGYAGMSMCQVSDFEAGASVYDLERRLVSELVEGLGHSQVEQRQGW</sequence>
<feature type="chain" id="PRO_0000321644" description="Octanoyltransferase">
    <location>
        <begin position="1"/>
        <end position="212"/>
    </location>
</feature>
<feature type="domain" description="BPL/LPL catalytic" evidence="2">
    <location>
        <begin position="30"/>
        <end position="205"/>
    </location>
</feature>
<feature type="active site" description="Acyl-thioester intermediate" evidence="1">
    <location>
        <position position="167"/>
    </location>
</feature>
<feature type="binding site" evidence="1">
    <location>
        <begin position="69"/>
        <end position="76"/>
    </location>
    <ligand>
        <name>substrate</name>
    </ligand>
</feature>
<feature type="binding site" evidence="1">
    <location>
        <begin position="136"/>
        <end position="138"/>
    </location>
    <ligand>
        <name>substrate</name>
    </ligand>
</feature>
<feature type="binding site" evidence="1">
    <location>
        <begin position="149"/>
        <end position="151"/>
    </location>
    <ligand>
        <name>substrate</name>
    </ligand>
</feature>
<feature type="site" description="Lowers pKa of active site Cys" evidence="1">
    <location>
        <position position="133"/>
    </location>
</feature>